<feature type="chain" id="PRO_1000010017" description="DNA mismatch repair protein MutL">
    <location>
        <begin position="1"/>
        <end position="630"/>
    </location>
</feature>
<feature type="region of interest" description="Disordered" evidence="2">
    <location>
        <begin position="361"/>
        <end position="386"/>
    </location>
</feature>
<feature type="region of interest" description="Disordered" evidence="2">
    <location>
        <begin position="407"/>
        <end position="431"/>
    </location>
</feature>
<feature type="compositionally biased region" description="Basic and acidic residues" evidence="2">
    <location>
        <begin position="407"/>
        <end position="421"/>
    </location>
</feature>
<dbReference type="EMBL" id="BA000043">
    <property type="protein sequence ID" value="BAD75592.1"/>
    <property type="molecule type" value="Genomic_DNA"/>
</dbReference>
<dbReference type="RefSeq" id="WP_011230806.1">
    <property type="nucleotide sequence ID" value="NC_006510.1"/>
</dbReference>
<dbReference type="SMR" id="Q5L0E4"/>
<dbReference type="STRING" id="235909.GK1307"/>
<dbReference type="KEGG" id="gka:GK1307"/>
<dbReference type="eggNOG" id="COG0323">
    <property type="taxonomic scope" value="Bacteria"/>
</dbReference>
<dbReference type="HOGENOM" id="CLU_004131_4_1_9"/>
<dbReference type="Proteomes" id="UP000001172">
    <property type="component" value="Chromosome"/>
</dbReference>
<dbReference type="GO" id="GO:0032300">
    <property type="term" value="C:mismatch repair complex"/>
    <property type="evidence" value="ECO:0007669"/>
    <property type="project" value="InterPro"/>
</dbReference>
<dbReference type="GO" id="GO:0005524">
    <property type="term" value="F:ATP binding"/>
    <property type="evidence" value="ECO:0007669"/>
    <property type="project" value="InterPro"/>
</dbReference>
<dbReference type="GO" id="GO:0016887">
    <property type="term" value="F:ATP hydrolysis activity"/>
    <property type="evidence" value="ECO:0007669"/>
    <property type="project" value="InterPro"/>
</dbReference>
<dbReference type="GO" id="GO:0140664">
    <property type="term" value="F:ATP-dependent DNA damage sensor activity"/>
    <property type="evidence" value="ECO:0007669"/>
    <property type="project" value="InterPro"/>
</dbReference>
<dbReference type="GO" id="GO:0030983">
    <property type="term" value="F:mismatched DNA binding"/>
    <property type="evidence" value="ECO:0007669"/>
    <property type="project" value="InterPro"/>
</dbReference>
<dbReference type="GO" id="GO:0006298">
    <property type="term" value="P:mismatch repair"/>
    <property type="evidence" value="ECO:0007669"/>
    <property type="project" value="UniProtKB-UniRule"/>
</dbReference>
<dbReference type="CDD" id="cd16926">
    <property type="entry name" value="HATPase_MutL-MLH-PMS-like"/>
    <property type="match status" value="1"/>
</dbReference>
<dbReference type="CDD" id="cd00782">
    <property type="entry name" value="MutL_Trans"/>
    <property type="match status" value="1"/>
</dbReference>
<dbReference type="FunFam" id="3.30.1370.100:FF:000004">
    <property type="entry name" value="DNA mismatch repair endonuclease MutL"/>
    <property type="match status" value="1"/>
</dbReference>
<dbReference type="FunFam" id="3.30.565.10:FF:000003">
    <property type="entry name" value="DNA mismatch repair endonuclease MutL"/>
    <property type="match status" value="1"/>
</dbReference>
<dbReference type="Gene3D" id="3.30.230.10">
    <property type="match status" value="1"/>
</dbReference>
<dbReference type="Gene3D" id="3.30.565.10">
    <property type="entry name" value="Histidine kinase-like ATPase, C-terminal domain"/>
    <property type="match status" value="1"/>
</dbReference>
<dbReference type="Gene3D" id="3.30.1540.20">
    <property type="entry name" value="MutL, C-terminal domain, dimerisation subdomain"/>
    <property type="match status" value="1"/>
</dbReference>
<dbReference type="Gene3D" id="3.30.1370.100">
    <property type="entry name" value="MutL, C-terminal domain, regulatory subdomain"/>
    <property type="match status" value="1"/>
</dbReference>
<dbReference type="HAMAP" id="MF_00149">
    <property type="entry name" value="DNA_mis_repair"/>
    <property type="match status" value="1"/>
</dbReference>
<dbReference type="InterPro" id="IPR014762">
    <property type="entry name" value="DNA_mismatch_repair_CS"/>
</dbReference>
<dbReference type="InterPro" id="IPR020667">
    <property type="entry name" value="DNA_mismatch_repair_MutL"/>
</dbReference>
<dbReference type="InterPro" id="IPR013507">
    <property type="entry name" value="DNA_mismatch_S5_2-like"/>
</dbReference>
<dbReference type="InterPro" id="IPR036890">
    <property type="entry name" value="HATPase_C_sf"/>
</dbReference>
<dbReference type="InterPro" id="IPR002099">
    <property type="entry name" value="MutL/Mlh/PMS"/>
</dbReference>
<dbReference type="InterPro" id="IPR038973">
    <property type="entry name" value="MutL/Mlh/Pms-like"/>
</dbReference>
<dbReference type="InterPro" id="IPR014790">
    <property type="entry name" value="MutL_C"/>
</dbReference>
<dbReference type="InterPro" id="IPR042120">
    <property type="entry name" value="MutL_C_dimsub"/>
</dbReference>
<dbReference type="InterPro" id="IPR042121">
    <property type="entry name" value="MutL_C_regsub"/>
</dbReference>
<dbReference type="InterPro" id="IPR037198">
    <property type="entry name" value="MutL_C_sf"/>
</dbReference>
<dbReference type="InterPro" id="IPR020568">
    <property type="entry name" value="Ribosomal_Su5_D2-typ_SF"/>
</dbReference>
<dbReference type="InterPro" id="IPR014721">
    <property type="entry name" value="Ribsml_uS5_D2-typ_fold_subgr"/>
</dbReference>
<dbReference type="NCBIfam" id="TIGR00585">
    <property type="entry name" value="mutl"/>
    <property type="match status" value="1"/>
</dbReference>
<dbReference type="NCBIfam" id="NF000950">
    <property type="entry name" value="PRK00095.1-3"/>
    <property type="match status" value="1"/>
</dbReference>
<dbReference type="PANTHER" id="PTHR10073">
    <property type="entry name" value="DNA MISMATCH REPAIR PROTEIN MLH, PMS, MUTL"/>
    <property type="match status" value="1"/>
</dbReference>
<dbReference type="PANTHER" id="PTHR10073:SF12">
    <property type="entry name" value="DNA MISMATCH REPAIR PROTEIN MLH1"/>
    <property type="match status" value="1"/>
</dbReference>
<dbReference type="Pfam" id="PF01119">
    <property type="entry name" value="DNA_mis_repair"/>
    <property type="match status" value="1"/>
</dbReference>
<dbReference type="Pfam" id="PF13589">
    <property type="entry name" value="HATPase_c_3"/>
    <property type="match status" value="1"/>
</dbReference>
<dbReference type="Pfam" id="PF08676">
    <property type="entry name" value="MutL_C"/>
    <property type="match status" value="1"/>
</dbReference>
<dbReference type="SMART" id="SM01340">
    <property type="entry name" value="DNA_mis_repair"/>
    <property type="match status" value="1"/>
</dbReference>
<dbReference type="SMART" id="SM00853">
    <property type="entry name" value="MutL_C"/>
    <property type="match status" value="1"/>
</dbReference>
<dbReference type="SUPFAM" id="SSF55874">
    <property type="entry name" value="ATPase domain of HSP90 chaperone/DNA topoisomerase II/histidine kinase"/>
    <property type="match status" value="1"/>
</dbReference>
<dbReference type="SUPFAM" id="SSF118116">
    <property type="entry name" value="DNA mismatch repair protein MutL"/>
    <property type="match status" value="1"/>
</dbReference>
<dbReference type="SUPFAM" id="SSF54211">
    <property type="entry name" value="Ribosomal protein S5 domain 2-like"/>
    <property type="match status" value="1"/>
</dbReference>
<dbReference type="PROSITE" id="PS00058">
    <property type="entry name" value="DNA_MISMATCH_REPAIR_1"/>
    <property type="match status" value="1"/>
</dbReference>
<organism>
    <name type="scientific">Geobacillus kaustophilus (strain HTA426)</name>
    <dbReference type="NCBI Taxonomy" id="235909"/>
    <lineage>
        <taxon>Bacteria</taxon>
        <taxon>Bacillati</taxon>
        <taxon>Bacillota</taxon>
        <taxon>Bacilli</taxon>
        <taxon>Bacillales</taxon>
        <taxon>Anoxybacillaceae</taxon>
        <taxon>Geobacillus</taxon>
        <taxon>Geobacillus thermoleovorans group</taxon>
    </lineage>
</organism>
<comment type="function">
    <text evidence="1">This protein is involved in the repair of mismatches in DNA. It is required for dam-dependent methyl-directed DNA mismatch repair. May act as a 'molecular matchmaker', a protein that promotes the formation of a stable complex between two or more DNA-binding proteins in an ATP-dependent manner without itself being part of a final effector complex.</text>
</comment>
<comment type="similarity">
    <text evidence="1">Belongs to the DNA mismatch repair MutL/HexB family.</text>
</comment>
<protein>
    <recommendedName>
        <fullName evidence="1">DNA mismatch repair protein MutL</fullName>
    </recommendedName>
</protein>
<sequence>MGRIRKLDDLLANKIAAGEVVERPASVVKELVENAIDAHSTVINIELEEAGMAKIRVIDNGDGMEEDDCLLAFERHATSKIHDEHDLFRIRTLGFRGEALPSIASVSEVELTTGTGSGPGTKLVLQGGALVSRERAAGRKGTDITVSNLFFNTPARLKYMKTIHTELGHAADVVNRLALAHPDVSFRLRHQGKTLLATNGSGDVRHVLAAIYGAETARQMIPIEAESLDFTIRGYISPPDVTRASRNYISLVVNGRYVRSVPLMKAIEAGYHTLLPIGRYPIVFLSIEMDPVLVDVNVHPAKLEVRFSKEAELNELVTDAIRQAFRKRTLIPSVSADSKMAKPKAEQAAWTFTHRVREPSVLSSDIGGGEDATAPLAPLTGDAPAERPSAAVQTDECGILDEHGPAFERKQEEEVGEERCSPRLPTDGQAEDKAAADRLPPLYPIGQLHGTYILAENEHGLYMIDQHAAQERINYEYFREKLGEATKEVQELLVPLMFEYPADEYERIAACRDELARCGVFLEPFGPRAFLVRSHPTWFPKGREREIIEEMIEQVLAAKTVDIKQLREQAAILMSCKRAIKANQHLRQDELFALLEALRQTTDPFTCPHGRPIIVHFSTYEIEKLFKRVM</sequence>
<keyword id="KW-0227">DNA damage</keyword>
<keyword id="KW-0234">DNA repair</keyword>
<keyword id="KW-1185">Reference proteome</keyword>
<proteinExistence type="inferred from homology"/>
<evidence type="ECO:0000255" key="1">
    <source>
        <dbReference type="HAMAP-Rule" id="MF_00149"/>
    </source>
</evidence>
<evidence type="ECO:0000256" key="2">
    <source>
        <dbReference type="SAM" id="MobiDB-lite"/>
    </source>
</evidence>
<accession>Q5L0E4</accession>
<gene>
    <name evidence="1" type="primary">mutL</name>
    <name type="ordered locus">GK1307</name>
</gene>
<name>MUTL_GEOKA</name>
<reference key="1">
    <citation type="journal article" date="2004" name="Nucleic Acids Res.">
        <title>Thermoadaptation trait revealed by the genome sequence of thermophilic Geobacillus kaustophilus.</title>
        <authorList>
            <person name="Takami H."/>
            <person name="Takaki Y."/>
            <person name="Chee G.-J."/>
            <person name="Nishi S."/>
            <person name="Shimamura S."/>
            <person name="Suzuki H."/>
            <person name="Matsui S."/>
            <person name="Uchiyama I."/>
        </authorList>
    </citation>
    <scope>NUCLEOTIDE SEQUENCE [LARGE SCALE GENOMIC DNA]</scope>
    <source>
        <strain>HTA426</strain>
    </source>
</reference>